<protein>
    <recommendedName>
        <fullName>High mobility group nucleosome-binding domain-containing protein 4</fullName>
    </recommendedName>
    <alternativeName>
        <fullName>Non-histone chromosomal protein HMG-17-like 3</fullName>
        <shortName>Non-histone chromosomal protein</shortName>
    </alternativeName>
</protein>
<keyword id="KW-0007">Acetylation</keyword>
<keyword id="KW-0013">ADP-ribosylation</keyword>
<keyword id="KW-0238">DNA-binding</keyword>
<keyword id="KW-0539">Nucleus</keyword>
<keyword id="KW-0597">Phosphoprotein</keyword>
<keyword id="KW-1267">Proteomics identification</keyword>
<keyword id="KW-1185">Reference proteome</keyword>
<name>HMGN4_HUMAN</name>
<organism>
    <name type="scientific">Homo sapiens</name>
    <name type="common">Human</name>
    <dbReference type="NCBI Taxonomy" id="9606"/>
    <lineage>
        <taxon>Eukaryota</taxon>
        <taxon>Metazoa</taxon>
        <taxon>Chordata</taxon>
        <taxon>Craniata</taxon>
        <taxon>Vertebrata</taxon>
        <taxon>Euteleostomi</taxon>
        <taxon>Mammalia</taxon>
        <taxon>Eutheria</taxon>
        <taxon>Euarchontoglires</taxon>
        <taxon>Primates</taxon>
        <taxon>Haplorrhini</taxon>
        <taxon>Catarrhini</taxon>
        <taxon>Hominidae</taxon>
        <taxon>Homo</taxon>
    </lineage>
</organism>
<comment type="interaction">
    <interactant intactId="EBI-2867693">
        <id>O00479</id>
    </interactant>
    <interactant intactId="EBI-750109">
        <id>Q9NYB0</id>
        <label>TERF2IP</label>
    </interactant>
    <organismsDiffer>false</organismsDiffer>
    <experiments>2</experiments>
</comment>
<comment type="subcellular location">
    <subcellularLocation>
        <location evidence="1">Nucleus</location>
    </subcellularLocation>
</comment>
<comment type="similarity">
    <text evidence="4">Belongs to the HMGN family.</text>
</comment>
<evidence type="ECO:0000250" key="1"/>
<evidence type="ECO:0000256" key="2">
    <source>
        <dbReference type="SAM" id="MobiDB-lite"/>
    </source>
</evidence>
<evidence type="ECO:0000269" key="3">
    <source>
    </source>
</evidence>
<evidence type="ECO:0000305" key="4"/>
<evidence type="ECO:0007744" key="5">
    <source>
    </source>
</evidence>
<evidence type="ECO:0007744" key="6">
    <source>
    </source>
</evidence>
<evidence type="ECO:0007744" key="7">
    <source>
    </source>
</evidence>
<reference key="1">
    <citation type="journal article" date="1997" name="Genome Res.">
        <title>A 1.1-Mb transcript map of the hereditary hemochromatosis locus.</title>
        <authorList>
            <person name="Ruddy D.A."/>
            <person name="Kronmal G.S."/>
            <person name="Lee V.K."/>
            <person name="Mintier G.A."/>
            <person name="Quintana L."/>
            <person name="Domingo R. Jr."/>
            <person name="Meyer N.C."/>
            <person name="Irrinki A."/>
            <person name="McClelland E.E."/>
            <person name="Fullan A."/>
            <person name="Mapa F.A."/>
            <person name="Moore T."/>
            <person name="Thomas W."/>
            <person name="Loeb D.B."/>
            <person name="Harmon C."/>
            <person name="Tsuchihashi Z."/>
            <person name="Wolff R.K."/>
            <person name="Schatzman R.C."/>
            <person name="Feder J.N."/>
        </authorList>
    </citation>
    <scope>NUCLEOTIDE SEQUENCE [MRNA]</scope>
</reference>
<reference key="2">
    <citation type="submission" date="2003-08" db="EMBL/GenBank/DDBJ databases">
        <title>Cloning of human full-length CDSs in BD Creator(TM) system donor vector.</title>
        <authorList>
            <person name="Kalnine N."/>
            <person name="Chen X."/>
            <person name="Rolfs A."/>
            <person name="Halleck A."/>
            <person name="Hines L."/>
            <person name="Eisenstein S."/>
            <person name="Koundinya M."/>
            <person name="Raphael J."/>
            <person name="Moreira D."/>
            <person name="Kelley T."/>
            <person name="LaBaer J."/>
            <person name="Lin Y."/>
            <person name="Phelan M."/>
            <person name="Farmer A."/>
        </authorList>
    </citation>
    <scope>NUCLEOTIDE SEQUENCE [LARGE SCALE MRNA]</scope>
</reference>
<reference key="3">
    <citation type="journal article" date="2004" name="Nat. Genet.">
        <title>Complete sequencing and characterization of 21,243 full-length human cDNAs.</title>
        <authorList>
            <person name="Ota T."/>
            <person name="Suzuki Y."/>
            <person name="Nishikawa T."/>
            <person name="Otsuki T."/>
            <person name="Sugiyama T."/>
            <person name="Irie R."/>
            <person name="Wakamatsu A."/>
            <person name="Hayashi K."/>
            <person name="Sato H."/>
            <person name="Nagai K."/>
            <person name="Kimura K."/>
            <person name="Makita H."/>
            <person name="Sekine M."/>
            <person name="Obayashi M."/>
            <person name="Nishi T."/>
            <person name="Shibahara T."/>
            <person name="Tanaka T."/>
            <person name="Ishii S."/>
            <person name="Yamamoto J."/>
            <person name="Saito K."/>
            <person name="Kawai Y."/>
            <person name="Isono Y."/>
            <person name="Nakamura Y."/>
            <person name="Nagahari K."/>
            <person name="Murakami K."/>
            <person name="Yasuda T."/>
            <person name="Iwayanagi T."/>
            <person name="Wagatsuma M."/>
            <person name="Shiratori A."/>
            <person name="Sudo H."/>
            <person name="Hosoiri T."/>
            <person name="Kaku Y."/>
            <person name="Kodaira H."/>
            <person name="Kondo H."/>
            <person name="Sugawara M."/>
            <person name="Takahashi M."/>
            <person name="Kanda K."/>
            <person name="Yokoi T."/>
            <person name="Furuya T."/>
            <person name="Kikkawa E."/>
            <person name="Omura Y."/>
            <person name="Abe K."/>
            <person name="Kamihara K."/>
            <person name="Katsuta N."/>
            <person name="Sato K."/>
            <person name="Tanikawa M."/>
            <person name="Yamazaki M."/>
            <person name="Ninomiya K."/>
            <person name="Ishibashi T."/>
            <person name="Yamashita H."/>
            <person name="Murakawa K."/>
            <person name="Fujimori K."/>
            <person name="Tanai H."/>
            <person name="Kimata M."/>
            <person name="Watanabe M."/>
            <person name="Hiraoka S."/>
            <person name="Chiba Y."/>
            <person name="Ishida S."/>
            <person name="Ono Y."/>
            <person name="Takiguchi S."/>
            <person name="Watanabe S."/>
            <person name="Yosida M."/>
            <person name="Hotuta T."/>
            <person name="Kusano J."/>
            <person name="Kanehori K."/>
            <person name="Takahashi-Fujii A."/>
            <person name="Hara H."/>
            <person name="Tanase T.-O."/>
            <person name="Nomura Y."/>
            <person name="Togiya S."/>
            <person name="Komai F."/>
            <person name="Hara R."/>
            <person name="Takeuchi K."/>
            <person name="Arita M."/>
            <person name="Imose N."/>
            <person name="Musashino K."/>
            <person name="Yuuki H."/>
            <person name="Oshima A."/>
            <person name="Sasaki N."/>
            <person name="Aotsuka S."/>
            <person name="Yoshikawa Y."/>
            <person name="Matsunawa H."/>
            <person name="Ichihara T."/>
            <person name="Shiohata N."/>
            <person name="Sano S."/>
            <person name="Moriya S."/>
            <person name="Momiyama H."/>
            <person name="Satoh N."/>
            <person name="Takami S."/>
            <person name="Terashima Y."/>
            <person name="Suzuki O."/>
            <person name="Nakagawa S."/>
            <person name="Senoh A."/>
            <person name="Mizoguchi H."/>
            <person name="Goto Y."/>
            <person name="Shimizu F."/>
            <person name="Wakebe H."/>
            <person name="Hishigaki H."/>
            <person name="Watanabe T."/>
            <person name="Sugiyama A."/>
            <person name="Takemoto M."/>
            <person name="Kawakami B."/>
            <person name="Yamazaki M."/>
            <person name="Watanabe K."/>
            <person name="Kumagai A."/>
            <person name="Itakura S."/>
            <person name="Fukuzumi Y."/>
            <person name="Fujimori Y."/>
            <person name="Komiyama M."/>
            <person name="Tashiro H."/>
            <person name="Tanigami A."/>
            <person name="Fujiwara T."/>
            <person name="Ono T."/>
            <person name="Yamada K."/>
            <person name="Fujii Y."/>
            <person name="Ozaki K."/>
            <person name="Hirao M."/>
            <person name="Ohmori Y."/>
            <person name="Kawabata A."/>
            <person name="Hikiji T."/>
            <person name="Kobatake N."/>
            <person name="Inagaki H."/>
            <person name="Ikema Y."/>
            <person name="Okamoto S."/>
            <person name="Okitani R."/>
            <person name="Kawakami T."/>
            <person name="Noguchi S."/>
            <person name="Itoh T."/>
            <person name="Shigeta K."/>
            <person name="Senba T."/>
            <person name="Matsumura K."/>
            <person name="Nakajima Y."/>
            <person name="Mizuno T."/>
            <person name="Morinaga M."/>
            <person name="Sasaki M."/>
            <person name="Togashi T."/>
            <person name="Oyama M."/>
            <person name="Hata H."/>
            <person name="Watanabe M."/>
            <person name="Komatsu T."/>
            <person name="Mizushima-Sugano J."/>
            <person name="Satoh T."/>
            <person name="Shirai Y."/>
            <person name="Takahashi Y."/>
            <person name="Nakagawa K."/>
            <person name="Okumura K."/>
            <person name="Nagase T."/>
            <person name="Nomura N."/>
            <person name="Kikuchi H."/>
            <person name="Masuho Y."/>
            <person name="Yamashita R."/>
            <person name="Nakai K."/>
            <person name="Yada T."/>
            <person name="Nakamura Y."/>
            <person name="Ohara O."/>
            <person name="Isogai T."/>
            <person name="Sugano S."/>
        </authorList>
    </citation>
    <scope>NUCLEOTIDE SEQUENCE [LARGE SCALE MRNA]</scope>
    <source>
        <tissue>Amygdala</tissue>
    </source>
</reference>
<reference key="4">
    <citation type="journal article" date="2003" name="Nature">
        <title>The DNA sequence and analysis of human chromosome 6.</title>
        <authorList>
            <person name="Mungall A.J."/>
            <person name="Palmer S.A."/>
            <person name="Sims S.K."/>
            <person name="Edwards C.A."/>
            <person name="Ashurst J.L."/>
            <person name="Wilming L."/>
            <person name="Jones M.C."/>
            <person name="Horton R."/>
            <person name="Hunt S.E."/>
            <person name="Scott C.E."/>
            <person name="Gilbert J.G.R."/>
            <person name="Clamp M.E."/>
            <person name="Bethel G."/>
            <person name="Milne S."/>
            <person name="Ainscough R."/>
            <person name="Almeida J.P."/>
            <person name="Ambrose K.D."/>
            <person name="Andrews T.D."/>
            <person name="Ashwell R.I.S."/>
            <person name="Babbage A.K."/>
            <person name="Bagguley C.L."/>
            <person name="Bailey J."/>
            <person name="Banerjee R."/>
            <person name="Barker D.J."/>
            <person name="Barlow K.F."/>
            <person name="Bates K."/>
            <person name="Beare D.M."/>
            <person name="Beasley H."/>
            <person name="Beasley O."/>
            <person name="Bird C.P."/>
            <person name="Blakey S.E."/>
            <person name="Bray-Allen S."/>
            <person name="Brook J."/>
            <person name="Brown A.J."/>
            <person name="Brown J.Y."/>
            <person name="Burford D.C."/>
            <person name="Burrill W."/>
            <person name="Burton J."/>
            <person name="Carder C."/>
            <person name="Carter N.P."/>
            <person name="Chapman J.C."/>
            <person name="Clark S.Y."/>
            <person name="Clark G."/>
            <person name="Clee C.M."/>
            <person name="Clegg S."/>
            <person name="Cobley V."/>
            <person name="Collier R.E."/>
            <person name="Collins J.E."/>
            <person name="Colman L.K."/>
            <person name="Corby N.R."/>
            <person name="Coville G.J."/>
            <person name="Culley K.M."/>
            <person name="Dhami P."/>
            <person name="Davies J."/>
            <person name="Dunn M."/>
            <person name="Earthrowl M.E."/>
            <person name="Ellington A.E."/>
            <person name="Evans K.A."/>
            <person name="Faulkner L."/>
            <person name="Francis M.D."/>
            <person name="Frankish A."/>
            <person name="Frankland J."/>
            <person name="French L."/>
            <person name="Garner P."/>
            <person name="Garnett J."/>
            <person name="Ghori M.J."/>
            <person name="Gilby L.M."/>
            <person name="Gillson C.J."/>
            <person name="Glithero R.J."/>
            <person name="Grafham D.V."/>
            <person name="Grant M."/>
            <person name="Gribble S."/>
            <person name="Griffiths C."/>
            <person name="Griffiths M.N.D."/>
            <person name="Hall R."/>
            <person name="Halls K.S."/>
            <person name="Hammond S."/>
            <person name="Harley J.L."/>
            <person name="Hart E.A."/>
            <person name="Heath P.D."/>
            <person name="Heathcott R."/>
            <person name="Holmes S.J."/>
            <person name="Howden P.J."/>
            <person name="Howe K.L."/>
            <person name="Howell G.R."/>
            <person name="Huckle E."/>
            <person name="Humphray S.J."/>
            <person name="Humphries M.D."/>
            <person name="Hunt A.R."/>
            <person name="Johnson C.M."/>
            <person name="Joy A.A."/>
            <person name="Kay M."/>
            <person name="Keenan S.J."/>
            <person name="Kimberley A.M."/>
            <person name="King A."/>
            <person name="Laird G.K."/>
            <person name="Langford C."/>
            <person name="Lawlor S."/>
            <person name="Leongamornlert D.A."/>
            <person name="Leversha M."/>
            <person name="Lloyd C.R."/>
            <person name="Lloyd D.M."/>
            <person name="Loveland J.E."/>
            <person name="Lovell J."/>
            <person name="Martin S."/>
            <person name="Mashreghi-Mohammadi M."/>
            <person name="Maslen G.L."/>
            <person name="Matthews L."/>
            <person name="McCann O.T."/>
            <person name="McLaren S.J."/>
            <person name="McLay K."/>
            <person name="McMurray A."/>
            <person name="Moore M.J.F."/>
            <person name="Mullikin J.C."/>
            <person name="Niblett D."/>
            <person name="Nickerson T."/>
            <person name="Novik K.L."/>
            <person name="Oliver K."/>
            <person name="Overton-Larty E.K."/>
            <person name="Parker A."/>
            <person name="Patel R."/>
            <person name="Pearce A.V."/>
            <person name="Peck A.I."/>
            <person name="Phillimore B.J.C.T."/>
            <person name="Phillips S."/>
            <person name="Plumb R.W."/>
            <person name="Porter K.M."/>
            <person name="Ramsey Y."/>
            <person name="Ranby S.A."/>
            <person name="Rice C.M."/>
            <person name="Ross M.T."/>
            <person name="Searle S.M."/>
            <person name="Sehra H.K."/>
            <person name="Sheridan E."/>
            <person name="Skuce C.D."/>
            <person name="Smith S."/>
            <person name="Smith M."/>
            <person name="Spraggon L."/>
            <person name="Squares S.L."/>
            <person name="Steward C.A."/>
            <person name="Sycamore N."/>
            <person name="Tamlyn-Hall G."/>
            <person name="Tester J."/>
            <person name="Theaker A.J."/>
            <person name="Thomas D.W."/>
            <person name="Thorpe A."/>
            <person name="Tracey A."/>
            <person name="Tromans A."/>
            <person name="Tubby B."/>
            <person name="Wall M."/>
            <person name="Wallis J.M."/>
            <person name="West A.P."/>
            <person name="White S.S."/>
            <person name="Whitehead S.L."/>
            <person name="Whittaker H."/>
            <person name="Wild A."/>
            <person name="Willey D.J."/>
            <person name="Wilmer T.E."/>
            <person name="Wood J.M."/>
            <person name="Wray P.W."/>
            <person name="Wyatt J.C."/>
            <person name="Young L."/>
            <person name="Younger R.M."/>
            <person name="Bentley D.R."/>
            <person name="Coulson A."/>
            <person name="Durbin R.M."/>
            <person name="Hubbard T."/>
            <person name="Sulston J.E."/>
            <person name="Dunham I."/>
            <person name="Rogers J."/>
            <person name="Beck S."/>
        </authorList>
    </citation>
    <scope>NUCLEOTIDE SEQUENCE [LARGE SCALE GENOMIC DNA]</scope>
</reference>
<reference key="5">
    <citation type="submission" date="2005-07" db="EMBL/GenBank/DDBJ databases">
        <authorList>
            <person name="Mural R.J."/>
            <person name="Istrail S."/>
            <person name="Sutton G.G."/>
            <person name="Florea L."/>
            <person name="Halpern A.L."/>
            <person name="Mobarry C.M."/>
            <person name="Lippert R."/>
            <person name="Walenz B."/>
            <person name="Shatkay H."/>
            <person name="Dew I."/>
            <person name="Miller J.R."/>
            <person name="Flanigan M.J."/>
            <person name="Edwards N.J."/>
            <person name="Bolanos R."/>
            <person name="Fasulo D."/>
            <person name="Halldorsson B.V."/>
            <person name="Hannenhalli S."/>
            <person name="Turner R."/>
            <person name="Yooseph S."/>
            <person name="Lu F."/>
            <person name="Nusskern D.R."/>
            <person name="Shue B.C."/>
            <person name="Zheng X.H."/>
            <person name="Zhong F."/>
            <person name="Delcher A.L."/>
            <person name="Huson D.H."/>
            <person name="Kravitz S.A."/>
            <person name="Mouchard L."/>
            <person name="Reinert K."/>
            <person name="Remington K.A."/>
            <person name="Clark A.G."/>
            <person name="Waterman M.S."/>
            <person name="Eichler E.E."/>
            <person name="Adams M.D."/>
            <person name="Hunkapiller M.W."/>
            <person name="Myers E.W."/>
            <person name="Venter J.C."/>
        </authorList>
    </citation>
    <scope>NUCLEOTIDE SEQUENCE [LARGE SCALE GENOMIC DNA]</scope>
</reference>
<reference key="6">
    <citation type="journal article" date="2004" name="Genome Res.">
        <title>The status, quality, and expansion of the NIH full-length cDNA project: the Mammalian Gene Collection (MGC).</title>
        <authorList>
            <consortium name="The MGC Project Team"/>
        </authorList>
    </citation>
    <scope>NUCLEOTIDE SEQUENCE [LARGE SCALE MRNA]</scope>
    <source>
        <tissue>Placenta</tissue>
    </source>
</reference>
<reference key="7">
    <citation type="journal article" date="2008" name="Proc. Natl. Acad. Sci. U.S.A.">
        <title>A quantitative atlas of mitotic phosphorylation.</title>
        <authorList>
            <person name="Dephoure N."/>
            <person name="Zhou C."/>
            <person name="Villen J."/>
            <person name="Beausoleil S.A."/>
            <person name="Bakalarski C.E."/>
            <person name="Elledge S.J."/>
            <person name="Gygi S.P."/>
        </authorList>
    </citation>
    <scope>PHOSPHORYLATION [LARGE SCALE ANALYSIS] AT SER-80</scope>
    <scope>IDENTIFICATION BY MASS SPECTROMETRY [LARGE SCALE ANALYSIS]</scope>
    <source>
        <tissue>Cervix carcinoma</tissue>
    </source>
</reference>
<reference key="8">
    <citation type="journal article" date="2009" name="Science">
        <title>Lysine acetylation targets protein complexes and co-regulates major cellular functions.</title>
        <authorList>
            <person name="Choudhary C."/>
            <person name="Kumar C."/>
            <person name="Gnad F."/>
            <person name="Nielsen M.L."/>
            <person name="Rehman M."/>
            <person name="Walther T.C."/>
            <person name="Olsen J.V."/>
            <person name="Mann M."/>
        </authorList>
    </citation>
    <scope>ACETYLATION [LARGE SCALE ANALYSIS] AT LYS-82</scope>
    <scope>IDENTIFICATION BY MASS SPECTROMETRY [LARGE SCALE ANALYSIS]</scope>
</reference>
<reference key="9">
    <citation type="journal article" date="2013" name="J. Proteome Res.">
        <title>Toward a comprehensive characterization of a human cancer cell phosphoproteome.</title>
        <authorList>
            <person name="Zhou H."/>
            <person name="Di Palma S."/>
            <person name="Preisinger C."/>
            <person name="Peng M."/>
            <person name="Polat A.N."/>
            <person name="Heck A.J."/>
            <person name="Mohammed S."/>
        </authorList>
    </citation>
    <scope>PHOSPHORYLATION [LARGE SCALE ANALYSIS] AT SER-80</scope>
    <scope>IDENTIFICATION BY MASS SPECTROMETRY [LARGE SCALE ANALYSIS]</scope>
    <source>
        <tissue>Erythroleukemia</tissue>
    </source>
</reference>
<reference key="10">
    <citation type="journal article" date="2017" name="Mol. Cell">
        <title>Serine ADP-ribosylation depends on HPF1.</title>
        <authorList>
            <person name="Bonfiglio J.J."/>
            <person name="Fontana P."/>
            <person name="Zhang Q."/>
            <person name="Colby T."/>
            <person name="Gibbs-Seymour I."/>
            <person name="Atanassov I."/>
            <person name="Bartlett E."/>
            <person name="Zaja R."/>
            <person name="Ahel I."/>
            <person name="Matic I."/>
        </authorList>
    </citation>
    <scope>ADP-RIBOSYLATION AT SER-29</scope>
</reference>
<accession>O00479</accession>
<accession>B2R4I6</accession>
<accession>Q53XL9</accession>
<proteinExistence type="evidence at protein level"/>
<feature type="chain" id="PRO_0000206704" description="High mobility group nucleosome-binding domain-containing protein 4">
    <location>
        <begin position="1"/>
        <end position="90"/>
    </location>
</feature>
<feature type="region of interest" description="Disordered" evidence="2">
    <location>
        <begin position="1"/>
        <end position="90"/>
    </location>
</feature>
<feature type="compositionally biased region" description="Basic and acidic residues" evidence="2">
    <location>
        <begin position="7"/>
        <end position="23"/>
    </location>
</feature>
<feature type="compositionally biased region" description="Basic and acidic residues" evidence="2">
    <location>
        <begin position="37"/>
        <end position="64"/>
    </location>
</feature>
<feature type="modified residue" description="ADP-ribosylserine" evidence="3">
    <location>
        <position position="29"/>
    </location>
</feature>
<feature type="modified residue" description="Phosphoserine" evidence="5 7">
    <location>
        <position position="80"/>
    </location>
</feature>
<feature type="modified residue" description="N6-acetyllysine" evidence="6">
    <location>
        <position position="82"/>
    </location>
</feature>
<sequence length="90" mass="9539">MPKRKAKGDAKGDKAKVKDEPQRRSARLSAKPAPPKPEPRPKKASAKKGEKLPKGRKGKADAGKDGNNPAKNRDASTLQSQKAEGTGDAK</sequence>
<dbReference type="EMBL" id="U90549">
    <property type="protein sequence ID" value="AAB53427.1"/>
    <property type="molecule type" value="mRNA"/>
</dbReference>
<dbReference type="EMBL" id="BT009824">
    <property type="protein sequence ID" value="AAP88826.1"/>
    <property type="molecule type" value="mRNA"/>
</dbReference>
<dbReference type="EMBL" id="AK311841">
    <property type="protein sequence ID" value="BAG34783.1"/>
    <property type="molecule type" value="mRNA"/>
</dbReference>
<dbReference type="EMBL" id="AL121936">
    <property type="status" value="NOT_ANNOTATED_CDS"/>
    <property type="molecule type" value="Genomic_DNA"/>
</dbReference>
<dbReference type="EMBL" id="CH471087">
    <property type="protein sequence ID" value="EAW55586.1"/>
    <property type="molecule type" value="Genomic_DNA"/>
</dbReference>
<dbReference type="EMBL" id="BC001282">
    <property type="protein sequence ID" value="AAH01282.1"/>
    <property type="molecule type" value="mRNA"/>
</dbReference>
<dbReference type="CCDS" id="CCDS4615.1"/>
<dbReference type="RefSeq" id="NP_006344.1">
    <property type="nucleotide sequence ID" value="NM_006353.3"/>
</dbReference>
<dbReference type="RefSeq" id="XP_016865660.1">
    <property type="nucleotide sequence ID" value="XM_017010171.1"/>
</dbReference>
<dbReference type="RefSeq" id="XP_016865661.1">
    <property type="nucleotide sequence ID" value="XM_017010172.1"/>
</dbReference>
<dbReference type="RefSeq" id="XP_016865662.1">
    <property type="nucleotide sequence ID" value="XM_017010173.1"/>
</dbReference>
<dbReference type="BioGRID" id="115736">
    <property type="interactions" value="106"/>
</dbReference>
<dbReference type="FunCoup" id="O00479">
    <property type="interactions" value="746"/>
</dbReference>
<dbReference type="IntAct" id="O00479">
    <property type="interactions" value="66"/>
</dbReference>
<dbReference type="MINT" id="O00479"/>
<dbReference type="STRING" id="9606.ENSP00000366798"/>
<dbReference type="GlyGen" id="O00479">
    <property type="glycosylation" value="1 site, 1 O-linked glycan (1 site)"/>
</dbReference>
<dbReference type="iPTMnet" id="O00479"/>
<dbReference type="PhosphoSitePlus" id="O00479"/>
<dbReference type="BioMuta" id="HMGN4"/>
<dbReference type="jPOST" id="O00479"/>
<dbReference type="MassIVE" id="O00479"/>
<dbReference type="PaxDb" id="9606-ENSP00000366798"/>
<dbReference type="PeptideAtlas" id="O00479"/>
<dbReference type="ProteomicsDB" id="47924"/>
<dbReference type="Pumba" id="O00479"/>
<dbReference type="TopDownProteomics" id="O00479"/>
<dbReference type="Antibodypedia" id="44621">
    <property type="antibodies" value="44 antibodies from 12 providers"/>
</dbReference>
<dbReference type="DNASU" id="10473"/>
<dbReference type="Ensembl" id="ENST00000377575.3">
    <property type="protein sequence ID" value="ENSP00000366798.1"/>
    <property type="gene ID" value="ENSG00000182952.5"/>
</dbReference>
<dbReference type="Ensembl" id="ENST00000709945.1">
    <property type="protein sequence ID" value="ENSP00000517955.1"/>
    <property type="gene ID" value="ENSG00000292175.1"/>
</dbReference>
<dbReference type="GeneID" id="10473"/>
<dbReference type="KEGG" id="hsa:10473"/>
<dbReference type="MANE-Select" id="ENST00000377575.3">
    <property type="protein sequence ID" value="ENSP00000366798.1"/>
    <property type="RefSeq nucleotide sequence ID" value="NM_006353.3"/>
    <property type="RefSeq protein sequence ID" value="NP_006344.1"/>
</dbReference>
<dbReference type="UCSC" id="uc003nig.4">
    <property type="organism name" value="human"/>
</dbReference>
<dbReference type="AGR" id="HGNC:4989"/>
<dbReference type="CTD" id="10473"/>
<dbReference type="DisGeNET" id="10473"/>
<dbReference type="GeneCards" id="HMGN4"/>
<dbReference type="HGNC" id="HGNC:4989">
    <property type="gene designation" value="HMGN4"/>
</dbReference>
<dbReference type="HPA" id="ENSG00000182952">
    <property type="expression patterns" value="Low tissue specificity"/>
</dbReference>
<dbReference type="neXtProt" id="NX_O00479"/>
<dbReference type="OpenTargets" id="ENSG00000182952"/>
<dbReference type="PharmGKB" id="PA35090"/>
<dbReference type="VEuPathDB" id="HostDB:ENSG00000182952"/>
<dbReference type="eggNOG" id="ENOG502S5FK">
    <property type="taxonomic scope" value="Eukaryota"/>
</dbReference>
<dbReference type="GeneTree" id="ENSGT00950000182802"/>
<dbReference type="HOGENOM" id="CLU_141985_0_2_1"/>
<dbReference type="InParanoid" id="O00479"/>
<dbReference type="OMA" id="QKAEHTG"/>
<dbReference type="PAN-GO" id="O00479">
    <property type="GO annotations" value="3 GO annotations based on evolutionary models"/>
</dbReference>
<dbReference type="PhylomeDB" id="O00479"/>
<dbReference type="PathwayCommons" id="O00479"/>
<dbReference type="SignaLink" id="O00479"/>
<dbReference type="BioGRID-ORCS" id="10473">
    <property type="hits" value="35 hits in 1156 CRISPR screens"/>
</dbReference>
<dbReference type="ChiTaRS" id="HMGN4">
    <property type="organism name" value="human"/>
</dbReference>
<dbReference type="GeneWiki" id="HMGN4"/>
<dbReference type="GenomeRNAi" id="10473"/>
<dbReference type="Pharos" id="O00479">
    <property type="development level" value="Tdark"/>
</dbReference>
<dbReference type="PRO" id="PR:O00479"/>
<dbReference type="Proteomes" id="UP000005640">
    <property type="component" value="Chromosome 6"/>
</dbReference>
<dbReference type="RNAct" id="O00479">
    <property type="molecule type" value="protein"/>
</dbReference>
<dbReference type="Bgee" id="ENSG00000182952">
    <property type="expression patterns" value="Expressed in secondary oocyte and 215 other cell types or tissues"/>
</dbReference>
<dbReference type="ExpressionAtlas" id="O00479">
    <property type="expression patterns" value="baseline and differential"/>
</dbReference>
<dbReference type="GO" id="GO:0000785">
    <property type="term" value="C:chromatin"/>
    <property type="evidence" value="ECO:0007669"/>
    <property type="project" value="InterPro"/>
</dbReference>
<dbReference type="GO" id="GO:0005634">
    <property type="term" value="C:nucleus"/>
    <property type="evidence" value="ECO:0000318"/>
    <property type="project" value="GO_Central"/>
</dbReference>
<dbReference type="GO" id="GO:0003682">
    <property type="term" value="F:chromatin binding"/>
    <property type="evidence" value="ECO:0000318"/>
    <property type="project" value="GO_Central"/>
</dbReference>
<dbReference type="GO" id="GO:0031492">
    <property type="term" value="F:nucleosomal DNA binding"/>
    <property type="evidence" value="ECO:0007669"/>
    <property type="project" value="InterPro"/>
</dbReference>
<dbReference type="GO" id="GO:0006325">
    <property type="term" value="P:chromatin organization"/>
    <property type="evidence" value="ECO:0000318"/>
    <property type="project" value="GO_Central"/>
</dbReference>
<dbReference type="InterPro" id="IPR000079">
    <property type="entry name" value="HMGN_fam"/>
</dbReference>
<dbReference type="PANTHER" id="PTHR23087:SF31">
    <property type="entry name" value="HIGH MOBILITY GROUP NUCLEOSOME-BINDING DOMAIN-CONTAINING PROTEIN 4"/>
    <property type="match status" value="1"/>
</dbReference>
<dbReference type="PANTHER" id="PTHR23087">
    <property type="entry name" value="NONHISTONE CHROMOSOMAL PROTEIN HMG"/>
    <property type="match status" value="1"/>
</dbReference>
<dbReference type="Pfam" id="PF01101">
    <property type="entry name" value="HMG14_17"/>
    <property type="match status" value="1"/>
</dbReference>
<dbReference type="PRINTS" id="PR00925">
    <property type="entry name" value="NONHISHMG17"/>
</dbReference>
<dbReference type="SMART" id="SM00527">
    <property type="entry name" value="HMG17"/>
    <property type="match status" value="1"/>
</dbReference>
<dbReference type="PROSITE" id="PS00355">
    <property type="entry name" value="HMG14_17"/>
    <property type="match status" value="1"/>
</dbReference>
<gene>
    <name type="primary">HMGN4</name>
    <name type="synonym">HMG17L3</name>
    <name type="synonym">NHC</name>
</gene>